<dbReference type="EMBL" id="Y14079">
    <property type="protein sequence ID" value="CAA74433.1"/>
    <property type="molecule type" value="Genomic_DNA"/>
</dbReference>
<dbReference type="EMBL" id="AL009126">
    <property type="protein sequence ID" value="CAB12761.1"/>
    <property type="molecule type" value="Genomic_DNA"/>
</dbReference>
<dbReference type="PIR" id="F69824">
    <property type="entry name" value="F69824"/>
</dbReference>
<dbReference type="RefSeq" id="NP_388814.1">
    <property type="nucleotide sequence ID" value="NC_000964.3"/>
</dbReference>
<dbReference type="RefSeq" id="WP_003245647.1">
    <property type="nucleotide sequence ID" value="NZ_OZ025638.1"/>
</dbReference>
<dbReference type="SMR" id="O07528"/>
<dbReference type="FunCoup" id="O07528">
    <property type="interactions" value="107"/>
</dbReference>
<dbReference type="STRING" id="224308.BSU09330"/>
<dbReference type="PaxDb" id="224308-BSU09330"/>
<dbReference type="EnsemblBacteria" id="CAB12761">
    <property type="protein sequence ID" value="CAB12761"/>
    <property type="gene ID" value="BSU_09330"/>
</dbReference>
<dbReference type="GeneID" id="939750"/>
<dbReference type="KEGG" id="bsu:BSU09330"/>
<dbReference type="PATRIC" id="fig|224308.179.peg.1006"/>
<dbReference type="eggNOG" id="COG2197">
    <property type="taxonomic scope" value="Bacteria"/>
</dbReference>
<dbReference type="InParanoid" id="O07528"/>
<dbReference type="OrthoDB" id="9780153at2"/>
<dbReference type="PhylomeDB" id="O07528"/>
<dbReference type="BioCyc" id="BSUB:BSU09330-MONOMER"/>
<dbReference type="Proteomes" id="UP000001570">
    <property type="component" value="Chromosome"/>
</dbReference>
<dbReference type="GO" id="GO:0005737">
    <property type="term" value="C:cytoplasm"/>
    <property type="evidence" value="ECO:0007669"/>
    <property type="project" value="UniProtKB-SubCell"/>
</dbReference>
<dbReference type="GO" id="GO:0003677">
    <property type="term" value="F:DNA binding"/>
    <property type="evidence" value="ECO:0007669"/>
    <property type="project" value="UniProtKB-KW"/>
</dbReference>
<dbReference type="GO" id="GO:0000160">
    <property type="term" value="P:phosphorelay signal transduction system"/>
    <property type="evidence" value="ECO:0007669"/>
    <property type="project" value="UniProtKB-KW"/>
</dbReference>
<dbReference type="GO" id="GO:0006355">
    <property type="term" value="P:regulation of DNA-templated transcription"/>
    <property type="evidence" value="ECO:0007669"/>
    <property type="project" value="InterPro"/>
</dbReference>
<dbReference type="CDD" id="cd06170">
    <property type="entry name" value="LuxR_C_like"/>
    <property type="match status" value="1"/>
</dbReference>
<dbReference type="CDD" id="cd17535">
    <property type="entry name" value="REC_NarL-like"/>
    <property type="match status" value="1"/>
</dbReference>
<dbReference type="Gene3D" id="3.40.50.2300">
    <property type="match status" value="1"/>
</dbReference>
<dbReference type="InterPro" id="IPR011006">
    <property type="entry name" value="CheY-like_superfamily"/>
</dbReference>
<dbReference type="InterPro" id="IPR016032">
    <property type="entry name" value="Sig_transdc_resp-reg_C-effctor"/>
</dbReference>
<dbReference type="InterPro" id="IPR001789">
    <property type="entry name" value="Sig_transdc_resp-reg_receiver"/>
</dbReference>
<dbReference type="InterPro" id="IPR000792">
    <property type="entry name" value="Tscrpt_reg_LuxR_C"/>
</dbReference>
<dbReference type="InterPro" id="IPR039420">
    <property type="entry name" value="WalR-like"/>
</dbReference>
<dbReference type="PANTHER" id="PTHR43214">
    <property type="entry name" value="TWO-COMPONENT RESPONSE REGULATOR"/>
    <property type="match status" value="1"/>
</dbReference>
<dbReference type="PANTHER" id="PTHR43214:SF43">
    <property type="entry name" value="TWO-COMPONENT RESPONSE REGULATOR"/>
    <property type="match status" value="1"/>
</dbReference>
<dbReference type="Pfam" id="PF00196">
    <property type="entry name" value="GerE"/>
    <property type="match status" value="1"/>
</dbReference>
<dbReference type="Pfam" id="PF00072">
    <property type="entry name" value="Response_reg"/>
    <property type="match status" value="1"/>
</dbReference>
<dbReference type="PRINTS" id="PR00038">
    <property type="entry name" value="HTHLUXR"/>
</dbReference>
<dbReference type="SMART" id="SM00421">
    <property type="entry name" value="HTH_LUXR"/>
    <property type="match status" value="1"/>
</dbReference>
<dbReference type="SMART" id="SM00448">
    <property type="entry name" value="REC"/>
    <property type="match status" value="1"/>
</dbReference>
<dbReference type="SUPFAM" id="SSF46894">
    <property type="entry name" value="C-terminal effector domain of the bipartite response regulators"/>
    <property type="match status" value="1"/>
</dbReference>
<dbReference type="SUPFAM" id="SSF52172">
    <property type="entry name" value="CheY-like"/>
    <property type="match status" value="1"/>
</dbReference>
<dbReference type="PROSITE" id="PS00622">
    <property type="entry name" value="HTH_LUXR_1"/>
    <property type="match status" value="1"/>
</dbReference>
<dbReference type="PROSITE" id="PS50043">
    <property type="entry name" value="HTH_LUXR_2"/>
    <property type="match status" value="1"/>
</dbReference>
<dbReference type="PROSITE" id="PS50110">
    <property type="entry name" value="RESPONSE_REGULATORY"/>
    <property type="match status" value="1"/>
</dbReference>
<organism>
    <name type="scientific">Bacillus subtilis (strain 168)</name>
    <dbReference type="NCBI Taxonomy" id="224308"/>
    <lineage>
        <taxon>Bacteria</taxon>
        <taxon>Bacillati</taxon>
        <taxon>Bacillota</taxon>
        <taxon>Bacilli</taxon>
        <taxon>Bacillales</taxon>
        <taxon>Bacillaceae</taxon>
        <taxon>Bacillus</taxon>
    </lineage>
</organism>
<protein>
    <recommendedName>
        <fullName>Uncharacterized transcriptional regulatory protein YhcZ</fullName>
    </recommendedName>
</protein>
<reference key="1">
    <citation type="journal article" date="1998" name="Microbiology">
        <title>The 172 kb prkA-addAB region from 83 degrees to 97 degrees of the Bacillus subtilis chromosome contains several dysfunctional genes, the glyB marker, many genes encoding transporter proteins, and the ubiquitous hit gene.</title>
        <authorList>
            <person name="Noback M.A."/>
            <person name="Holsappel S."/>
            <person name="Kiewiet R."/>
            <person name="Terpstra P."/>
            <person name="Wambutt R."/>
            <person name="Wedler H."/>
            <person name="Venema G."/>
            <person name="Bron S."/>
        </authorList>
    </citation>
    <scope>NUCLEOTIDE SEQUENCE [GENOMIC DNA]</scope>
    <source>
        <strain>168</strain>
    </source>
</reference>
<reference key="2">
    <citation type="journal article" date="1997" name="Nature">
        <title>The complete genome sequence of the Gram-positive bacterium Bacillus subtilis.</title>
        <authorList>
            <person name="Kunst F."/>
            <person name="Ogasawara N."/>
            <person name="Moszer I."/>
            <person name="Albertini A.M."/>
            <person name="Alloni G."/>
            <person name="Azevedo V."/>
            <person name="Bertero M.G."/>
            <person name="Bessieres P."/>
            <person name="Bolotin A."/>
            <person name="Borchert S."/>
            <person name="Borriss R."/>
            <person name="Boursier L."/>
            <person name="Brans A."/>
            <person name="Braun M."/>
            <person name="Brignell S.C."/>
            <person name="Bron S."/>
            <person name="Brouillet S."/>
            <person name="Bruschi C.V."/>
            <person name="Caldwell B."/>
            <person name="Capuano V."/>
            <person name="Carter N.M."/>
            <person name="Choi S.-K."/>
            <person name="Codani J.-J."/>
            <person name="Connerton I.F."/>
            <person name="Cummings N.J."/>
            <person name="Daniel R.A."/>
            <person name="Denizot F."/>
            <person name="Devine K.M."/>
            <person name="Duesterhoeft A."/>
            <person name="Ehrlich S.D."/>
            <person name="Emmerson P.T."/>
            <person name="Entian K.-D."/>
            <person name="Errington J."/>
            <person name="Fabret C."/>
            <person name="Ferrari E."/>
            <person name="Foulger D."/>
            <person name="Fritz C."/>
            <person name="Fujita M."/>
            <person name="Fujita Y."/>
            <person name="Fuma S."/>
            <person name="Galizzi A."/>
            <person name="Galleron N."/>
            <person name="Ghim S.-Y."/>
            <person name="Glaser P."/>
            <person name="Goffeau A."/>
            <person name="Golightly E.J."/>
            <person name="Grandi G."/>
            <person name="Guiseppi G."/>
            <person name="Guy B.J."/>
            <person name="Haga K."/>
            <person name="Haiech J."/>
            <person name="Harwood C.R."/>
            <person name="Henaut A."/>
            <person name="Hilbert H."/>
            <person name="Holsappel S."/>
            <person name="Hosono S."/>
            <person name="Hullo M.-F."/>
            <person name="Itaya M."/>
            <person name="Jones L.-M."/>
            <person name="Joris B."/>
            <person name="Karamata D."/>
            <person name="Kasahara Y."/>
            <person name="Klaerr-Blanchard M."/>
            <person name="Klein C."/>
            <person name="Kobayashi Y."/>
            <person name="Koetter P."/>
            <person name="Koningstein G."/>
            <person name="Krogh S."/>
            <person name="Kumano M."/>
            <person name="Kurita K."/>
            <person name="Lapidus A."/>
            <person name="Lardinois S."/>
            <person name="Lauber J."/>
            <person name="Lazarevic V."/>
            <person name="Lee S.-M."/>
            <person name="Levine A."/>
            <person name="Liu H."/>
            <person name="Masuda S."/>
            <person name="Mauel C."/>
            <person name="Medigue C."/>
            <person name="Medina N."/>
            <person name="Mellado R.P."/>
            <person name="Mizuno M."/>
            <person name="Moestl D."/>
            <person name="Nakai S."/>
            <person name="Noback M."/>
            <person name="Noone D."/>
            <person name="O'Reilly M."/>
            <person name="Ogawa K."/>
            <person name="Ogiwara A."/>
            <person name="Oudega B."/>
            <person name="Park S.-H."/>
            <person name="Parro V."/>
            <person name="Pohl T.M."/>
            <person name="Portetelle D."/>
            <person name="Porwollik S."/>
            <person name="Prescott A.M."/>
            <person name="Presecan E."/>
            <person name="Pujic P."/>
            <person name="Purnelle B."/>
            <person name="Rapoport G."/>
            <person name="Rey M."/>
            <person name="Reynolds S."/>
            <person name="Rieger M."/>
            <person name="Rivolta C."/>
            <person name="Rocha E."/>
            <person name="Roche B."/>
            <person name="Rose M."/>
            <person name="Sadaie Y."/>
            <person name="Sato T."/>
            <person name="Scanlan E."/>
            <person name="Schleich S."/>
            <person name="Schroeter R."/>
            <person name="Scoffone F."/>
            <person name="Sekiguchi J."/>
            <person name="Sekowska A."/>
            <person name="Seror S.J."/>
            <person name="Serror P."/>
            <person name="Shin B.-S."/>
            <person name="Soldo B."/>
            <person name="Sorokin A."/>
            <person name="Tacconi E."/>
            <person name="Takagi T."/>
            <person name="Takahashi H."/>
            <person name="Takemaru K."/>
            <person name="Takeuchi M."/>
            <person name="Tamakoshi A."/>
            <person name="Tanaka T."/>
            <person name="Terpstra P."/>
            <person name="Tognoni A."/>
            <person name="Tosato V."/>
            <person name="Uchiyama S."/>
            <person name="Vandenbol M."/>
            <person name="Vannier F."/>
            <person name="Vassarotti A."/>
            <person name="Viari A."/>
            <person name="Wambutt R."/>
            <person name="Wedler E."/>
            <person name="Wedler H."/>
            <person name="Weitzenegger T."/>
            <person name="Winters P."/>
            <person name="Wipat A."/>
            <person name="Yamamoto H."/>
            <person name="Yamane K."/>
            <person name="Yasumoto K."/>
            <person name="Yata K."/>
            <person name="Yoshida K."/>
            <person name="Yoshikawa H.-F."/>
            <person name="Zumstein E."/>
            <person name="Yoshikawa H."/>
            <person name="Danchin A."/>
        </authorList>
    </citation>
    <scope>NUCLEOTIDE SEQUENCE [LARGE SCALE GENOMIC DNA]</scope>
    <source>
        <strain>168</strain>
    </source>
</reference>
<reference key="3">
    <citation type="journal article" date="2001" name="J. Bacteriol.">
        <title>Comprehensive DNA microarray analysis of Bacillus subtilis two-component regulatory systems.</title>
        <authorList>
            <person name="Kobayashi K."/>
            <person name="Ogura M."/>
            <person name="Yamaguchi H."/>
            <person name="Yoshida K."/>
            <person name="Ogasawara N."/>
            <person name="Tanaka T."/>
            <person name="Fujita Y."/>
        </authorList>
    </citation>
    <scope>FUNCTION</scope>
</reference>
<name>YHCZ_BACSU</name>
<proteinExistence type="inferred from homology"/>
<feature type="chain" id="PRO_0000360776" description="Uncharacterized transcriptional regulatory protein YhcZ">
    <location>
        <begin position="1"/>
        <end position="214"/>
    </location>
</feature>
<feature type="domain" description="Response regulatory" evidence="2">
    <location>
        <begin position="2"/>
        <end position="118"/>
    </location>
</feature>
<feature type="domain" description="HTH luxR-type" evidence="3">
    <location>
        <begin position="142"/>
        <end position="207"/>
    </location>
</feature>
<feature type="DNA-binding region" description="H-T-H motif" evidence="3">
    <location>
        <begin position="166"/>
        <end position="185"/>
    </location>
</feature>
<feature type="modified residue" description="4-aspartylphosphate" evidence="2">
    <location>
        <position position="53"/>
    </location>
</feature>
<accession>O07528</accession>
<accession>Q796Y1</accession>
<evidence type="ECO:0000250" key="1"/>
<evidence type="ECO:0000255" key="2">
    <source>
        <dbReference type="PROSITE-ProRule" id="PRU00169"/>
    </source>
</evidence>
<evidence type="ECO:0000255" key="3">
    <source>
        <dbReference type="PROSITE-ProRule" id="PRU00411"/>
    </source>
</evidence>
<evidence type="ECO:0000269" key="4">
    <source>
    </source>
</evidence>
<evidence type="ECO:0000305" key="5"/>
<comment type="function">
    <text evidence="4">Member of the two-component regulatory system YhcY/YhcZ.</text>
</comment>
<comment type="subcellular location">
    <subcellularLocation>
        <location evidence="5">Cytoplasm</location>
    </subcellularLocation>
</comment>
<comment type="PTM">
    <text evidence="1">Phosphorylated by YhcY.</text>
</comment>
<sequence length="214" mass="24023">MKIVIADDHHVVRKGLRFFFATQDDIEVVGEAATGLEALRVIEETKPDLVLMDLSMPEMDGIQAIKKAIQQFPDTNIIVLTSYSDQEHVIPALQAGAKAYQLKDTEPEELVKTRQVHGGEYKLSTAIMPHVLTHMKNQHDPEKEKYYQLTRREKDVLTEIANGKSNKEIAAALFISEKTVKTHVSNLLAKLEVADRTQAALFAVKYNLNGEISK</sequence>
<gene>
    <name type="primary">yhcZ</name>
    <name type="ordered locus">BSU09330</name>
</gene>
<keyword id="KW-0963">Cytoplasm</keyword>
<keyword id="KW-0238">DNA-binding</keyword>
<keyword id="KW-0597">Phosphoprotein</keyword>
<keyword id="KW-1185">Reference proteome</keyword>
<keyword id="KW-0804">Transcription</keyword>
<keyword id="KW-0805">Transcription regulation</keyword>
<keyword id="KW-0902">Two-component regulatory system</keyword>